<organism>
    <name type="scientific">Bos taurus</name>
    <name type="common">Bovine</name>
    <dbReference type="NCBI Taxonomy" id="9913"/>
    <lineage>
        <taxon>Eukaryota</taxon>
        <taxon>Metazoa</taxon>
        <taxon>Chordata</taxon>
        <taxon>Craniata</taxon>
        <taxon>Vertebrata</taxon>
        <taxon>Euteleostomi</taxon>
        <taxon>Mammalia</taxon>
        <taxon>Eutheria</taxon>
        <taxon>Laurasiatheria</taxon>
        <taxon>Artiodactyla</taxon>
        <taxon>Ruminantia</taxon>
        <taxon>Pecora</taxon>
        <taxon>Bovidae</taxon>
        <taxon>Bovinae</taxon>
        <taxon>Bos</taxon>
    </lineage>
</organism>
<evidence type="ECO:0000250" key="1"/>
<evidence type="ECO:0000250" key="2">
    <source>
        <dbReference type="UniProtKB" id="P05771"/>
    </source>
</evidence>
<evidence type="ECO:0000250" key="3">
    <source>
        <dbReference type="UniProtKB" id="P68403"/>
    </source>
</evidence>
<evidence type="ECO:0000250" key="4">
    <source>
        <dbReference type="UniProtKB" id="P68404"/>
    </source>
</evidence>
<evidence type="ECO:0000255" key="5"/>
<evidence type="ECO:0000255" key="6">
    <source>
        <dbReference type="PROSITE-ProRule" id="PRU00041"/>
    </source>
</evidence>
<evidence type="ECO:0000255" key="7">
    <source>
        <dbReference type="PROSITE-ProRule" id="PRU00159"/>
    </source>
</evidence>
<evidence type="ECO:0000255" key="8">
    <source>
        <dbReference type="PROSITE-ProRule" id="PRU00226"/>
    </source>
</evidence>
<evidence type="ECO:0000255" key="9">
    <source>
        <dbReference type="PROSITE-ProRule" id="PRU00618"/>
    </source>
</evidence>
<evidence type="ECO:0000255" key="10">
    <source>
        <dbReference type="PROSITE-ProRule" id="PRU10027"/>
    </source>
</evidence>
<evidence type="ECO:0000256" key="11">
    <source>
        <dbReference type="SAM" id="MobiDB-lite"/>
    </source>
</evidence>
<evidence type="ECO:0000303" key="12">
    <source>
    </source>
</evidence>
<evidence type="ECO:0000305" key="13"/>
<comment type="function">
    <text evidence="2 4">Calcium-activated, phospholipid- and diacylglycerol (DAG)-dependent serine/threonine-protein kinase involved in various cellular processes such as regulation of the B-cell receptor (BCR) signalosome, oxidative stress-induced apoptosis, androgen receptor-dependent transcription regulation, insulin signaling and endothelial cells proliferation. Plays a key role in B-cell activation by regulating BCR-induced NF-kappa-B activation. Mediates the activation of the canonical NF-kappa-B pathway (NFKB1) by direct phosphorylation of CARD11/CARMA1 at 'Ser-559', 'Ser-644' and 'Ser-652'. Phosphorylation induces CARD11/CARMA1 association with lipid rafts and recruitment of the BCL10-MALT1 complex as well as MAP3K7/TAK1, which then activates IKK complex, resulting in nuclear translocation and activation of NFKB1. Plays a direct role in the negative feedback regulation of the BCR signaling, by down-modulating BTK function via direct phosphorylation of BTK at 'Ser-180', which results in the alteration of BTK plasma membrane localization and in turn inhibition of BTK activity. Involved in apoptosis following oxidative damage: in case of oxidative conditions, specifically phosphorylates 'Ser-36' of isoform p66Shc of SHC1, leading to mitochondrial accumulation of p66Shc, where p66Shc acts as a reactive oxygen species producer. Acts as a coactivator of androgen receptor (ANDR)-dependent transcription, by being recruited to ANDR target genes and specifically mediating phosphorylation of 'Thr-6' of histone H3 (H3T6ph), a specific tag for epigenetic transcriptional activation that prevents demethylation of histone H3 'Lys-4' (H3K4me) by LSD1/KDM1A. In insulin signaling, may function downstream of IRS1 in muscle cells and mediate insulin-dependent DNA synthesis through the RAF1-MAPK/ERK signaling cascade. Participates in the regulation of glucose transport in adipocytes by negatively modulating the insulin-stimulated translocation of the glucose transporter SLC2A4/GLUT4. Phosphorylates SLC2A1/GLUT1, promoting glucose uptake by SLC2A1/GLUT1. Under high glucose in pancreatic beta-cells, is probably involved in the inhibition of the insulin gene transcription, via regulation of MYC expression. In endothelial cells, activation of PRKCB induces increased phosphorylation of RB1, increased VEGFA-induced cell proliferation, and inhibits PI3K/AKT-dependent nitric oxide synthase (NOS3/eNOS) regulation by insulin, which causes endothelial dysfunction. Also involved in triglyceride homeostasis. Phosphorylates ATF2 which promotes cooperation between ATF2 and JUN, activating transcription (By similarity). Phosphorylates KLHL3 in response to angiotensin II signaling, decreasing the interaction between KLHL3 and WNK4 (By similarity). Phosphorylates and activates LRRK1, which phosphorylates RAB proteins involved in intracellular trafficking (By similarity).</text>
</comment>
<comment type="catalytic activity">
    <reaction evidence="2">
        <text>L-seryl-[protein] + ATP = O-phospho-L-seryl-[protein] + ADP + H(+)</text>
        <dbReference type="Rhea" id="RHEA:17989"/>
        <dbReference type="Rhea" id="RHEA-COMP:9863"/>
        <dbReference type="Rhea" id="RHEA-COMP:11604"/>
        <dbReference type="ChEBI" id="CHEBI:15378"/>
        <dbReference type="ChEBI" id="CHEBI:29999"/>
        <dbReference type="ChEBI" id="CHEBI:30616"/>
        <dbReference type="ChEBI" id="CHEBI:83421"/>
        <dbReference type="ChEBI" id="CHEBI:456216"/>
        <dbReference type="EC" id="2.7.11.13"/>
    </reaction>
</comment>
<comment type="catalytic activity">
    <reaction evidence="2">
        <text>L-threonyl-[protein] + ATP = O-phospho-L-threonyl-[protein] + ADP + H(+)</text>
        <dbReference type="Rhea" id="RHEA:46608"/>
        <dbReference type="Rhea" id="RHEA-COMP:11060"/>
        <dbReference type="Rhea" id="RHEA-COMP:11605"/>
        <dbReference type="ChEBI" id="CHEBI:15378"/>
        <dbReference type="ChEBI" id="CHEBI:30013"/>
        <dbReference type="ChEBI" id="CHEBI:30616"/>
        <dbReference type="ChEBI" id="CHEBI:61977"/>
        <dbReference type="ChEBI" id="CHEBI:456216"/>
        <dbReference type="EC" id="2.7.11.13"/>
    </reaction>
</comment>
<comment type="cofactor">
    <cofactor evidence="6">
        <name>Ca(2+)</name>
        <dbReference type="ChEBI" id="CHEBI:29108"/>
    </cofactor>
    <text evidence="3">Binds 3 Ca(2+) ions per subunit. The ions are bound to the C2 domain.</text>
</comment>
<comment type="activity regulation">
    <text evidence="1">Classical (or conventional) PKCs (PRKCA, PRKCB and PRKCG) are activated by calcium and diacylglycerol (DAG) in the presence of phosphatidylserine. Three specific sites; Thr-500 (activation loop of the kinase domain), Thr-642 (turn motif) and Ser-661 (hydrophobic region), need to be phosphorylated for its full activation. Specifically inhibited by enzastaurin (LY317615) (By similarity).</text>
</comment>
<comment type="subunit">
    <text evidence="1">Interacts with PDK1. Interacts in vitro with PRKCBP1. Interacts with PHLPP1 and PHLPP2; both proteins mediate its dephosphorylation. Interacts with KDM1A/LSD1, PKN1 and ANDR (By similarity).</text>
</comment>
<comment type="subcellular location">
    <subcellularLocation>
        <location evidence="1">Cytoplasm</location>
    </subcellularLocation>
    <subcellularLocation>
        <location evidence="1">Nucleus</location>
    </subcellularLocation>
    <subcellularLocation>
        <location evidence="1">Membrane</location>
        <topology evidence="1">Peripheral membrane protein</topology>
    </subcellularLocation>
</comment>
<comment type="alternative products">
    <event type="alternative splicing"/>
    <isoform>
        <id>P05126-1</id>
        <name>Beta-I</name>
        <name>PRKCB1</name>
        <sequence type="displayed"/>
    </isoform>
    <isoform>
        <id>P05126-2</id>
        <name>Beta-II</name>
        <name>PRKCB2</name>
        <sequence type="described" ref="VSP_039222"/>
    </isoform>
</comment>
<comment type="PTM">
    <text evidence="1">Phosphorylation on Thr-500 within the activation loop renders it competent to autophosphorylate. Subsequent autophosphorylation of Thr-642 maintains catalytic competence, and autophosphorylation on Ser-661 appears to release the kinase into the cytosol. Autophosphorylation on other sites i.e. in the N-terminal and hinge regions have no effect on enzyme activity. Phosphorylation at Tyr-662 by SYK induces binding with GRB2 and contributes to the activation of MAPK/ERK signaling cascade (By similarity).</text>
</comment>
<comment type="similarity">
    <text evidence="13">Belongs to the protein kinase superfamily. AGC Ser/Thr protein kinase family. PKC subfamily.</text>
</comment>
<gene>
    <name type="primary">PRKCB</name>
    <name type="synonym">PRKCB1</name>
</gene>
<reference key="1">
    <citation type="journal article" date="1986" name="Science">
        <title>Multiple, distinct forms of bovine and human protein kinase C suggest diversity in cellular signaling pathways.</title>
        <authorList>
            <person name="Coussens L."/>
            <person name="Parker P.J."/>
            <person name="Rhee L."/>
            <person name="Yang-Feng T.L."/>
            <person name="Chen E."/>
            <person name="Waterfield M.D."/>
            <person name="Francke U."/>
            <person name="Ullrich A."/>
        </authorList>
    </citation>
    <scope>NUCLEOTIDE SEQUENCE [MRNA] (ISOFORM BETA-II)</scope>
</reference>
<reference key="2">
    <citation type="submission" date="2007-04" db="EMBL/GenBank/DDBJ databases">
        <authorList>
            <consortium name="NIH - Mammalian Gene Collection (MGC) project"/>
        </authorList>
    </citation>
    <scope>NUCLEOTIDE SEQUENCE [LARGE SCALE MRNA] (ISOFORM BETA-I)</scope>
    <source>
        <strain>Hereford</strain>
        <tissue>Fetal pons</tissue>
    </source>
</reference>
<reference key="3">
    <citation type="journal article" date="1988" name="Nature">
        <title>The molecular heterogeneity of protein kinase C and its implications for cellular regulation.</title>
        <authorList>
            <person name="Nishizuka Y."/>
        </authorList>
    </citation>
    <scope>REVIEW</scope>
</reference>
<feature type="initiator methionine" description="Removed" evidence="2">
    <location>
        <position position="1"/>
    </location>
</feature>
<feature type="chain" id="PRO_0000055683" description="Protein kinase C beta type">
    <location>
        <begin position="2"/>
        <end position="671"/>
    </location>
</feature>
<feature type="domain" description="C2" evidence="6">
    <location>
        <begin position="158"/>
        <end position="275"/>
    </location>
</feature>
<feature type="domain" description="Protein kinase" evidence="7">
    <location>
        <begin position="342"/>
        <end position="600"/>
    </location>
</feature>
<feature type="domain" description="AGC-kinase C-terminal" evidence="9">
    <location>
        <begin position="601"/>
        <end position="671"/>
    </location>
</feature>
<feature type="zinc finger region" description="Phorbol-ester/DAG-type 1" evidence="8">
    <location>
        <begin position="36"/>
        <end position="86"/>
    </location>
</feature>
<feature type="zinc finger region" description="Phorbol-ester/DAG-type 2" evidence="8">
    <location>
        <begin position="101"/>
        <end position="151"/>
    </location>
</feature>
<feature type="region of interest" description="Disordered" evidence="11">
    <location>
        <begin position="309"/>
        <end position="330"/>
    </location>
</feature>
<feature type="region of interest" description="Disordered" evidence="11">
    <location>
        <begin position="614"/>
        <end position="635"/>
    </location>
</feature>
<feature type="compositionally biased region" description="Basic and acidic residues" evidence="11">
    <location>
        <begin position="623"/>
        <end position="635"/>
    </location>
</feature>
<feature type="active site" description="Proton acceptor" evidence="7 10">
    <location>
        <position position="466"/>
    </location>
</feature>
<feature type="binding site" evidence="3">
    <location>
        <position position="186"/>
    </location>
    <ligand>
        <name>Ca(2+)</name>
        <dbReference type="ChEBI" id="CHEBI:29108"/>
        <label>1</label>
    </ligand>
</feature>
<feature type="binding site" evidence="3">
    <location>
        <position position="187"/>
    </location>
    <ligand>
        <name>Ca(2+)</name>
        <dbReference type="ChEBI" id="CHEBI:29108"/>
        <label>1</label>
    </ligand>
</feature>
<feature type="binding site" evidence="3">
    <location>
        <position position="187"/>
    </location>
    <ligand>
        <name>Ca(2+)</name>
        <dbReference type="ChEBI" id="CHEBI:29108"/>
        <label>2</label>
    </ligand>
</feature>
<feature type="binding site" evidence="3">
    <location>
        <position position="193"/>
    </location>
    <ligand>
        <name>Ca(2+)</name>
        <dbReference type="ChEBI" id="CHEBI:29108"/>
        <label>2</label>
    </ligand>
</feature>
<feature type="binding site" evidence="3">
    <location>
        <position position="246"/>
    </location>
    <ligand>
        <name>Ca(2+)</name>
        <dbReference type="ChEBI" id="CHEBI:29108"/>
        <label>1</label>
    </ligand>
</feature>
<feature type="binding site" evidence="3">
    <location>
        <position position="246"/>
    </location>
    <ligand>
        <name>Ca(2+)</name>
        <dbReference type="ChEBI" id="CHEBI:29108"/>
        <label>2</label>
    </ligand>
</feature>
<feature type="binding site" evidence="3">
    <location>
        <position position="247"/>
    </location>
    <ligand>
        <name>Ca(2+)</name>
        <dbReference type="ChEBI" id="CHEBI:29108"/>
        <label>2</label>
    </ligand>
</feature>
<feature type="binding site" evidence="3">
    <location>
        <position position="248"/>
    </location>
    <ligand>
        <name>Ca(2+)</name>
        <dbReference type="ChEBI" id="CHEBI:29108"/>
        <label>1</label>
    </ligand>
</feature>
<feature type="binding site" evidence="3">
    <location>
        <position position="248"/>
    </location>
    <ligand>
        <name>Ca(2+)</name>
        <dbReference type="ChEBI" id="CHEBI:29108"/>
        <label>2</label>
    </ligand>
</feature>
<feature type="binding site" evidence="3">
    <location>
        <position position="248"/>
    </location>
    <ligand>
        <name>Ca(2+)</name>
        <dbReference type="ChEBI" id="CHEBI:29108"/>
        <label>3</label>
    </ligand>
</feature>
<feature type="binding site" evidence="3">
    <location>
        <position position="251"/>
    </location>
    <ligand>
        <name>Ca(2+)</name>
        <dbReference type="ChEBI" id="CHEBI:29108"/>
        <label>3</label>
    </ligand>
</feature>
<feature type="binding site" evidence="3">
    <location>
        <position position="252"/>
    </location>
    <ligand>
        <name>Ca(2+)</name>
        <dbReference type="ChEBI" id="CHEBI:29108"/>
        <label>3</label>
    </ligand>
</feature>
<feature type="binding site" evidence="3">
    <location>
        <position position="254"/>
    </location>
    <ligand>
        <name>Ca(2+)</name>
        <dbReference type="ChEBI" id="CHEBI:29108"/>
        <label>1</label>
    </ligand>
</feature>
<feature type="binding site" evidence="3">
    <location>
        <position position="254"/>
    </location>
    <ligand>
        <name>Ca(2+)</name>
        <dbReference type="ChEBI" id="CHEBI:29108"/>
        <label>3</label>
    </ligand>
</feature>
<feature type="binding site" evidence="7">
    <location>
        <begin position="348"/>
        <end position="356"/>
    </location>
    <ligand>
        <name>ATP</name>
        <dbReference type="ChEBI" id="CHEBI:30616"/>
    </ligand>
</feature>
<feature type="binding site" evidence="7">
    <location>
        <position position="371"/>
    </location>
    <ligand>
        <name>ATP</name>
        <dbReference type="ChEBI" id="CHEBI:30616"/>
    </ligand>
</feature>
<feature type="modified residue" description="N-acetylalanine" evidence="2">
    <location>
        <position position="2"/>
    </location>
</feature>
<feature type="modified residue" description="Phosphoserine" evidence="2">
    <location>
        <position position="11"/>
    </location>
</feature>
<feature type="modified residue" description="Phosphoserine; by autocatalysis" evidence="3 5">
    <location>
        <position position="16"/>
    </location>
</feature>
<feature type="modified residue" description="Phosphothreonine; by autocatalysis" evidence="3 5">
    <location>
        <position position="17"/>
    </location>
</feature>
<feature type="modified residue" description="Phosphoserine" evidence="2">
    <location>
        <position position="206"/>
    </location>
</feature>
<feature type="modified residue" description="Phosphothreonine; by autocatalysis" evidence="1">
    <location>
        <position position="250"/>
    </location>
</feature>
<feature type="modified residue" description="Phosphothreonine; by autocatalysis" evidence="3 5">
    <location>
        <position position="324"/>
    </location>
</feature>
<feature type="modified residue" description="Phosphothreonine; by PDPK1" evidence="2">
    <location>
        <position position="500"/>
    </location>
</feature>
<feature type="modified residue" description="Phosphothreonine" evidence="2">
    <location>
        <position position="504"/>
    </location>
</feature>
<feature type="modified residue" description="Phosphothreonine; by autocatalysis" evidence="3">
    <location>
        <position position="635"/>
    </location>
</feature>
<feature type="modified residue" description="Phosphothreonine; by autocatalysis" evidence="3">
    <location>
        <position position="642"/>
    </location>
</feature>
<feature type="modified residue" description="Phosphoserine; by autocatalysis" evidence="2">
    <location>
        <position position="661"/>
    </location>
</feature>
<feature type="modified residue" description="Phosphotyrosine; by SYK" evidence="4">
    <location>
        <position position="662"/>
    </location>
</feature>
<feature type="splice variant" id="VSP_039222" description="In isoform Beta-II." evidence="12">
    <original>RDKRDTSNFDKEFTRQPVELTPTDKLFIMNLDQNEFAGFSYTNPEFVINV</original>
    <variation>CGRNAENFDRFFTRHPPVLTPPDQEVIRNIDQSEFEGFSFVNSEFLKPEVKS</variation>
    <location>
        <begin position="622"/>
        <end position="671"/>
    </location>
</feature>
<feature type="sequence conflict" description="In Ref. 2; AAA30703." evidence="13" ref="2">
    <original>M</original>
    <variation>I</variation>
    <location>
        <position position="576"/>
    </location>
</feature>
<keyword id="KW-0007">Acetylation</keyword>
<keyword id="KW-1064">Adaptive immunity</keyword>
<keyword id="KW-0025">Alternative splicing</keyword>
<keyword id="KW-0053">Apoptosis</keyword>
<keyword id="KW-0067">ATP-binding</keyword>
<keyword id="KW-0106">Calcium</keyword>
<keyword id="KW-0156">Chromatin regulator</keyword>
<keyword id="KW-0963">Cytoplasm</keyword>
<keyword id="KW-0391">Immunity</keyword>
<keyword id="KW-0418">Kinase</keyword>
<keyword id="KW-0472">Membrane</keyword>
<keyword id="KW-0479">Metal-binding</keyword>
<keyword id="KW-0547">Nucleotide-binding</keyword>
<keyword id="KW-0539">Nucleus</keyword>
<keyword id="KW-0597">Phosphoprotein</keyword>
<keyword id="KW-1185">Reference proteome</keyword>
<keyword id="KW-0677">Repeat</keyword>
<keyword id="KW-0723">Serine/threonine-protein kinase</keyword>
<keyword id="KW-0804">Transcription</keyword>
<keyword id="KW-0805">Transcription regulation</keyword>
<keyword id="KW-0808">Transferase</keyword>
<keyword id="KW-0862">Zinc</keyword>
<keyword id="KW-0863">Zinc-finger</keyword>
<protein>
    <recommendedName>
        <fullName>Protein kinase C beta type</fullName>
        <shortName>PKC-B</shortName>
        <shortName>PKC-beta</shortName>
        <ecNumber evidence="2">2.7.11.13</ecNumber>
    </recommendedName>
</protein>
<sequence>MADPAAGPPPSEGEESTVRFARKGALRQKNVHEVKNHKFTARFFKQPTFCSHCTDFIWGFGKQGFQCQVCCFVVHKRCHEFVTFSCPGADKGPASDDPRSKHKFKIHTYSSPTFCDHCGSLLYGLIHQGMKCDTCMMNVHKRCVMNVPSLCGTDHTERRGRIYIQAHIEREVLIVVVRDAKNLVPMDPNGLSDPYVKLKLIPDPKSESKQKTKTIKCSLNPEWNETFRFQLKESDKDRRLSVEIWDWDLTSRNDFMGSLSFGISELQKAGVDGWFKLLSQEEGEYFNVPVPPEGSEGNEELRQKFERAKIGPGPKTPEEKTTNTISKFDNNGNRDRMKLTDFNFLMVLGKGSFGKVMLSERKGTDELYAVKILKKDVVIQDDDVECTMVEKRVLALPGKPPFLTQLHSCFQTMDRLYFVMEYVNGGDLMYHIQQVGRFKEPHAVFYAAEIAIGLFFLQSKGIIYRDLKLDNVMLDSEGHIKIADFGMCKENIWDGVTTKTFCGTPDYIAPEIIAYQPYGKSVDWWAFGVLLYEMLAGQAPFEGEDEDELFQSIMEHNVAYPKSMSKEAVAICKGLMTKHPGKRLGCGPEGERDIKEHAFFRYIDWEKLERKEIQPPYKPKARDKRDTSNFDKEFTRQPVELTPTDKLFIMNLDQNEFAGFSYTNPEFVINV</sequence>
<name>KPCB_BOVIN</name>
<proteinExistence type="evidence at transcript level"/>
<dbReference type="EC" id="2.7.11.13" evidence="2"/>
<dbReference type="EMBL" id="M13974">
    <property type="protein sequence ID" value="AAA30703.1"/>
    <property type="molecule type" value="mRNA"/>
</dbReference>
<dbReference type="EMBL" id="BC140620">
    <property type="protein sequence ID" value="AAI40621.1"/>
    <property type="molecule type" value="mRNA"/>
</dbReference>
<dbReference type="PIR" id="A24664">
    <property type="entry name" value="KIBOC2"/>
</dbReference>
<dbReference type="RefSeq" id="NP_777012.1">
    <property type="nucleotide sequence ID" value="NM_174587.1"/>
</dbReference>
<dbReference type="RefSeq" id="XP_005224747.1">
    <molecule id="P05126-1"/>
    <property type="nucleotide sequence ID" value="XM_005224690.5"/>
</dbReference>
<dbReference type="SMR" id="P05126"/>
<dbReference type="BioGRID" id="159587">
    <property type="interactions" value="1"/>
</dbReference>
<dbReference type="FunCoup" id="P05126">
    <property type="interactions" value="1662"/>
</dbReference>
<dbReference type="STRING" id="9913.ENSBTAP00000027870"/>
<dbReference type="PaxDb" id="9913-ENSBTAP00000027870"/>
<dbReference type="Ensembl" id="ENSBTAT00000070516.2">
    <molecule id="P05126-2"/>
    <property type="protein sequence ID" value="ENSBTAP00000070362.2"/>
    <property type="gene ID" value="ENSBTAG00000020921.7"/>
</dbReference>
<dbReference type="Ensembl" id="ENSBTAT00000084339.2">
    <molecule id="P05126-1"/>
    <property type="protein sequence ID" value="ENSBTAP00000065659.1"/>
    <property type="gene ID" value="ENSBTAG00000020921.7"/>
</dbReference>
<dbReference type="GeneID" id="282325"/>
<dbReference type="KEGG" id="bta:282325"/>
<dbReference type="CTD" id="5579"/>
<dbReference type="VEuPathDB" id="HostDB:ENSBTAG00000020921"/>
<dbReference type="eggNOG" id="KOG0696">
    <property type="taxonomic scope" value="Eukaryota"/>
</dbReference>
<dbReference type="GeneTree" id="ENSGT00940000155217"/>
<dbReference type="HOGENOM" id="CLU_000288_54_2_1"/>
<dbReference type="InParanoid" id="P05126"/>
<dbReference type="OMA" id="VVXQLKE"/>
<dbReference type="OrthoDB" id="63267at2759"/>
<dbReference type="TreeFam" id="TF351133"/>
<dbReference type="BRENDA" id="2.7.11.13">
    <property type="organism ID" value="908"/>
</dbReference>
<dbReference type="Reactome" id="R-BTA-114516">
    <property type="pathway name" value="Disinhibition of SNARE formation"/>
</dbReference>
<dbReference type="Reactome" id="R-BTA-1169091">
    <property type="pathway name" value="Activation of NF-kappaB in B cells"/>
</dbReference>
<dbReference type="Reactome" id="R-BTA-416993">
    <property type="pathway name" value="Trafficking of GluR2-containing AMPA receptors"/>
</dbReference>
<dbReference type="Reactome" id="R-BTA-4419969">
    <property type="pathway name" value="Depolymerization of the Nuclear Lamina"/>
</dbReference>
<dbReference type="Reactome" id="R-BTA-5099900">
    <property type="pathway name" value="WNT5A-dependent internalization of FZD4"/>
</dbReference>
<dbReference type="Reactome" id="R-BTA-5218921">
    <property type="pathway name" value="VEGFR2 mediated cell proliferation"/>
</dbReference>
<dbReference type="Reactome" id="R-BTA-5668599">
    <property type="pathway name" value="RHO GTPases Activate NADPH Oxidases"/>
</dbReference>
<dbReference type="Reactome" id="R-BTA-76005">
    <property type="pathway name" value="Response to elevated platelet cytosolic Ca2+"/>
</dbReference>
<dbReference type="Proteomes" id="UP000009136">
    <property type="component" value="Chromosome 25"/>
</dbReference>
<dbReference type="Bgee" id="ENSBTAG00000020921">
    <property type="expression patterns" value="Expressed in occipital lobe and 104 other cell types or tissues"/>
</dbReference>
<dbReference type="GO" id="GO:0044305">
    <property type="term" value="C:calyx of Held"/>
    <property type="evidence" value="ECO:0007669"/>
    <property type="project" value="Ensembl"/>
</dbReference>
<dbReference type="GO" id="GO:0005654">
    <property type="term" value="C:nucleoplasm"/>
    <property type="evidence" value="ECO:0007669"/>
    <property type="project" value="Ensembl"/>
</dbReference>
<dbReference type="GO" id="GO:0005634">
    <property type="term" value="C:nucleus"/>
    <property type="evidence" value="ECO:0000250"/>
    <property type="project" value="UniProtKB"/>
</dbReference>
<dbReference type="GO" id="GO:0005886">
    <property type="term" value="C:plasma membrane"/>
    <property type="evidence" value="ECO:0007669"/>
    <property type="project" value="Ensembl"/>
</dbReference>
<dbReference type="GO" id="GO:0099523">
    <property type="term" value="C:presynaptic cytosol"/>
    <property type="evidence" value="ECO:0007669"/>
    <property type="project" value="Ensembl"/>
</dbReference>
<dbReference type="GO" id="GO:0008091">
    <property type="term" value="C:spectrin"/>
    <property type="evidence" value="ECO:0007669"/>
    <property type="project" value="Ensembl"/>
</dbReference>
<dbReference type="GO" id="GO:0005524">
    <property type="term" value="F:ATP binding"/>
    <property type="evidence" value="ECO:0007669"/>
    <property type="project" value="UniProtKB-KW"/>
</dbReference>
<dbReference type="GO" id="GO:0005246">
    <property type="term" value="F:calcium channel regulator activity"/>
    <property type="evidence" value="ECO:0007669"/>
    <property type="project" value="Ensembl"/>
</dbReference>
<dbReference type="GO" id="GO:0004698">
    <property type="term" value="F:calcium,diacylglycerol-dependent serine/threonine kinase activity"/>
    <property type="evidence" value="ECO:0000250"/>
    <property type="project" value="UniProtKB"/>
</dbReference>
<dbReference type="GO" id="GO:0003682">
    <property type="term" value="F:chromatin binding"/>
    <property type="evidence" value="ECO:0000250"/>
    <property type="project" value="UniProtKB"/>
</dbReference>
<dbReference type="GO" id="GO:0042393">
    <property type="term" value="F:histone binding"/>
    <property type="evidence" value="ECO:0000250"/>
    <property type="project" value="UniProtKB"/>
</dbReference>
<dbReference type="GO" id="GO:0035403">
    <property type="term" value="F:histone H3T6 kinase activity"/>
    <property type="evidence" value="ECO:0000250"/>
    <property type="project" value="UniProtKB"/>
</dbReference>
<dbReference type="GO" id="GO:0050681">
    <property type="term" value="F:nuclear androgen receptor binding"/>
    <property type="evidence" value="ECO:0000250"/>
    <property type="project" value="UniProtKB"/>
</dbReference>
<dbReference type="GO" id="GO:0005080">
    <property type="term" value="F:protein kinase C binding"/>
    <property type="evidence" value="ECO:0007669"/>
    <property type="project" value="Ensembl"/>
</dbReference>
<dbReference type="GO" id="GO:0106310">
    <property type="term" value="F:protein serine kinase activity"/>
    <property type="evidence" value="ECO:0007669"/>
    <property type="project" value="RHEA"/>
</dbReference>
<dbReference type="GO" id="GO:0004674">
    <property type="term" value="F:protein serine/threonine kinase activity"/>
    <property type="evidence" value="ECO:0000318"/>
    <property type="project" value="GO_Central"/>
</dbReference>
<dbReference type="GO" id="GO:0003713">
    <property type="term" value="F:transcription coactivator activity"/>
    <property type="evidence" value="ECO:0000250"/>
    <property type="project" value="UniProtKB"/>
</dbReference>
<dbReference type="GO" id="GO:0008270">
    <property type="term" value="F:zinc ion binding"/>
    <property type="evidence" value="ECO:0007669"/>
    <property type="project" value="UniProtKB-KW"/>
</dbReference>
<dbReference type="GO" id="GO:0002250">
    <property type="term" value="P:adaptive immune response"/>
    <property type="evidence" value="ECO:0007669"/>
    <property type="project" value="UniProtKB-KW"/>
</dbReference>
<dbReference type="GO" id="GO:0006915">
    <property type="term" value="P:apoptotic process"/>
    <property type="evidence" value="ECO:0007669"/>
    <property type="project" value="UniProtKB-KW"/>
</dbReference>
<dbReference type="GO" id="GO:0042113">
    <property type="term" value="P:B cell activation"/>
    <property type="evidence" value="ECO:0000250"/>
    <property type="project" value="UniProtKB"/>
</dbReference>
<dbReference type="GO" id="GO:0050853">
    <property type="term" value="P:B cell receptor signaling pathway"/>
    <property type="evidence" value="ECO:0000250"/>
    <property type="project" value="UniProtKB"/>
</dbReference>
<dbReference type="GO" id="GO:0006816">
    <property type="term" value="P:calcium ion transport"/>
    <property type="evidence" value="ECO:0007669"/>
    <property type="project" value="Ensembl"/>
</dbReference>
<dbReference type="GO" id="GO:0071322">
    <property type="term" value="P:cellular response to carbohydrate stimulus"/>
    <property type="evidence" value="ECO:0007669"/>
    <property type="project" value="Ensembl"/>
</dbReference>
<dbReference type="GO" id="GO:0006874">
    <property type="term" value="P:intracellular calcium ion homeostasis"/>
    <property type="evidence" value="ECO:0007669"/>
    <property type="project" value="Ensembl"/>
</dbReference>
<dbReference type="GO" id="GO:0035556">
    <property type="term" value="P:intracellular signal transduction"/>
    <property type="evidence" value="ECO:0000318"/>
    <property type="project" value="GO_Central"/>
</dbReference>
<dbReference type="GO" id="GO:0010829">
    <property type="term" value="P:negative regulation of D-glucose transmembrane transport"/>
    <property type="evidence" value="ECO:0000250"/>
    <property type="project" value="UniProtKB"/>
</dbReference>
<dbReference type="GO" id="GO:0046627">
    <property type="term" value="P:negative regulation of insulin receptor signaling pathway"/>
    <property type="evidence" value="ECO:0000250"/>
    <property type="project" value="UniProtKB"/>
</dbReference>
<dbReference type="GO" id="GO:0007207">
    <property type="term" value="P:phospholipase C-activating G protein-coupled acetylcholine receptor signaling pathway"/>
    <property type="evidence" value="ECO:0007669"/>
    <property type="project" value="Ensembl"/>
</dbReference>
<dbReference type="GO" id="GO:0045766">
    <property type="term" value="P:positive regulation of angiogenesis"/>
    <property type="evidence" value="ECO:0000250"/>
    <property type="project" value="UniProtKB"/>
</dbReference>
<dbReference type="GO" id="GO:0043123">
    <property type="term" value="P:positive regulation of canonical NF-kappaB signal transduction"/>
    <property type="evidence" value="ECO:0000250"/>
    <property type="project" value="UniProtKB"/>
</dbReference>
<dbReference type="GO" id="GO:0032024">
    <property type="term" value="P:positive regulation of insulin secretion"/>
    <property type="evidence" value="ECO:0007669"/>
    <property type="project" value="Ensembl"/>
</dbReference>
<dbReference type="GO" id="GO:0030949">
    <property type="term" value="P:positive regulation of vascular endothelial growth factor receptor signaling pathway"/>
    <property type="evidence" value="ECO:0000250"/>
    <property type="project" value="UniProtKB"/>
</dbReference>
<dbReference type="GO" id="GO:0099171">
    <property type="term" value="P:presynaptic modulation of chemical synaptic transmission"/>
    <property type="evidence" value="ECO:0007669"/>
    <property type="project" value="Ensembl"/>
</dbReference>
<dbReference type="GO" id="GO:0070528">
    <property type="term" value="P:protein kinase C signaling"/>
    <property type="evidence" value="ECO:0000250"/>
    <property type="project" value="UniProtKB"/>
</dbReference>
<dbReference type="GO" id="GO:0010827">
    <property type="term" value="P:regulation of D-glucose transmembrane transport"/>
    <property type="evidence" value="ECO:0000250"/>
    <property type="project" value="UniProtKB"/>
</dbReference>
<dbReference type="GO" id="GO:2000300">
    <property type="term" value="P:regulation of synaptic vesicle exocytosis"/>
    <property type="evidence" value="ECO:0007669"/>
    <property type="project" value="Ensembl"/>
</dbReference>
<dbReference type="GO" id="GO:0006357">
    <property type="term" value="P:regulation of transcription by RNA polymerase II"/>
    <property type="evidence" value="ECO:0000250"/>
    <property type="project" value="UniProtKB"/>
</dbReference>
<dbReference type="CDD" id="cd20833">
    <property type="entry name" value="C1_cPKC_rpt1"/>
    <property type="match status" value="1"/>
</dbReference>
<dbReference type="CDD" id="cd20836">
    <property type="entry name" value="C1_cPKC_rpt2"/>
    <property type="match status" value="1"/>
</dbReference>
<dbReference type="CDD" id="cd04026">
    <property type="entry name" value="C2_PKC_alpha_gamma"/>
    <property type="match status" value="1"/>
</dbReference>
<dbReference type="FunFam" id="2.60.40.150:FF:000012">
    <property type="entry name" value="Kinase C alpha type"/>
    <property type="match status" value="1"/>
</dbReference>
<dbReference type="FunFam" id="1.10.510.10:FF:000023">
    <property type="entry name" value="Protein kinase C"/>
    <property type="match status" value="1"/>
</dbReference>
<dbReference type="FunFam" id="3.30.200.20:FF:000080">
    <property type="entry name" value="Protein kinase C"/>
    <property type="match status" value="1"/>
</dbReference>
<dbReference type="FunFam" id="3.30.60.20:FF:000006">
    <property type="entry name" value="Protein kinase C"/>
    <property type="match status" value="1"/>
</dbReference>
<dbReference type="FunFam" id="3.30.60.20:FF:000031">
    <property type="entry name" value="Protein kinase C alpha"/>
    <property type="match status" value="1"/>
</dbReference>
<dbReference type="Gene3D" id="3.30.60.20">
    <property type="match status" value="2"/>
</dbReference>
<dbReference type="Gene3D" id="2.60.40.150">
    <property type="entry name" value="C2 domain"/>
    <property type="match status" value="1"/>
</dbReference>
<dbReference type="Gene3D" id="3.30.200.20">
    <property type="entry name" value="Phosphorylase Kinase, domain 1"/>
    <property type="match status" value="2"/>
</dbReference>
<dbReference type="Gene3D" id="1.10.510.10">
    <property type="entry name" value="Transferase(Phosphotransferase) domain 1"/>
    <property type="match status" value="1"/>
</dbReference>
<dbReference type="InterPro" id="IPR000961">
    <property type="entry name" value="AGC-kinase_C"/>
</dbReference>
<dbReference type="InterPro" id="IPR046349">
    <property type="entry name" value="C1-like_sf"/>
</dbReference>
<dbReference type="InterPro" id="IPR000008">
    <property type="entry name" value="C2_dom"/>
</dbReference>
<dbReference type="InterPro" id="IPR035892">
    <property type="entry name" value="C2_domain_sf"/>
</dbReference>
<dbReference type="InterPro" id="IPR020454">
    <property type="entry name" value="DAG/PE-bd"/>
</dbReference>
<dbReference type="InterPro" id="IPR011009">
    <property type="entry name" value="Kinase-like_dom_sf"/>
</dbReference>
<dbReference type="InterPro" id="IPR002219">
    <property type="entry name" value="PE/DAG-bd"/>
</dbReference>
<dbReference type="InterPro" id="IPR017892">
    <property type="entry name" value="Pkinase_C"/>
</dbReference>
<dbReference type="InterPro" id="IPR000719">
    <property type="entry name" value="Prot_kinase_dom"/>
</dbReference>
<dbReference type="InterPro" id="IPR017441">
    <property type="entry name" value="Protein_kinase_ATP_BS"/>
</dbReference>
<dbReference type="InterPro" id="IPR014375">
    <property type="entry name" value="Protein_kinase_C_a/b/g"/>
</dbReference>
<dbReference type="InterPro" id="IPR008271">
    <property type="entry name" value="Ser/Thr_kinase_AS"/>
</dbReference>
<dbReference type="PANTHER" id="PTHR24351">
    <property type="entry name" value="RIBOSOMAL PROTEIN S6 KINASE"/>
    <property type="match status" value="1"/>
</dbReference>
<dbReference type="Pfam" id="PF00130">
    <property type="entry name" value="C1_1"/>
    <property type="match status" value="2"/>
</dbReference>
<dbReference type="Pfam" id="PF00168">
    <property type="entry name" value="C2"/>
    <property type="match status" value="1"/>
</dbReference>
<dbReference type="Pfam" id="PF00069">
    <property type="entry name" value="Pkinase"/>
    <property type="match status" value="1"/>
</dbReference>
<dbReference type="Pfam" id="PF00433">
    <property type="entry name" value="Pkinase_C"/>
    <property type="match status" value="1"/>
</dbReference>
<dbReference type="PIRSF" id="PIRSF000550">
    <property type="entry name" value="PKC_alpha"/>
    <property type="match status" value="1"/>
</dbReference>
<dbReference type="PRINTS" id="PR00360">
    <property type="entry name" value="C2DOMAIN"/>
</dbReference>
<dbReference type="PRINTS" id="PR00008">
    <property type="entry name" value="DAGPEDOMAIN"/>
</dbReference>
<dbReference type="SMART" id="SM00109">
    <property type="entry name" value="C1"/>
    <property type="match status" value="2"/>
</dbReference>
<dbReference type="SMART" id="SM00239">
    <property type="entry name" value="C2"/>
    <property type="match status" value="1"/>
</dbReference>
<dbReference type="SMART" id="SM00133">
    <property type="entry name" value="S_TK_X"/>
    <property type="match status" value="1"/>
</dbReference>
<dbReference type="SMART" id="SM00220">
    <property type="entry name" value="S_TKc"/>
    <property type="match status" value="1"/>
</dbReference>
<dbReference type="SUPFAM" id="SSF49562">
    <property type="entry name" value="C2 domain (Calcium/lipid-binding domain, CaLB)"/>
    <property type="match status" value="1"/>
</dbReference>
<dbReference type="SUPFAM" id="SSF57889">
    <property type="entry name" value="Cysteine-rich domain"/>
    <property type="match status" value="2"/>
</dbReference>
<dbReference type="SUPFAM" id="SSF56112">
    <property type="entry name" value="Protein kinase-like (PK-like)"/>
    <property type="match status" value="1"/>
</dbReference>
<dbReference type="PROSITE" id="PS51285">
    <property type="entry name" value="AGC_KINASE_CTER"/>
    <property type="match status" value="1"/>
</dbReference>
<dbReference type="PROSITE" id="PS50004">
    <property type="entry name" value="C2"/>
    <property type="match status" value="1"/>
</dbReference>
<dbReference type="PROSITE" id="PS00107">
    <property type="entry name" value="PROTEIN_KINASE_ATP"/>
    <property type="match status" value="1"/>
</dbReference>
<dbReference type="PROSITE" id="PS50011">
    <property type="entry name" value="PROTEIN_KINASE_DOM"/>
    <property type="match status" value="1"/>
</dbReference>
<dbReference type="PROSITE" id="PS00108">
    <property type="entry name" value="PROTEIN_KINASE_ST"/>
    <property type="match status" value="1"/>
</dbReference>
<dbReference type="PROSITE" id="PS00479">
    <property type="entry name" value="ZF_DAG_PE_1"/>
    <property type="match status" value="2"/>
</dbReference>
<dbReference type="PROSITE" id="PS50081">
    <property type="entry name" value="ZF_DAG_PE_2"/>
    <property type="match status" value="2"/>
</dbReference>
<accession>P05126</accession>
<accession>A5D7N0</accession>